<evidence type="ECO:0000256" key="1">
    <source>
        <dbReference type="SAM" id="MobiDB-lite"/>
    </source>
</evidence>
<evidence type="ECO:0000305" key="2"/>
<keyword id="KW-0346">Stress response</keyword>
<reference key="1">
    <citation type="journal article" date="1990" name="Plant Physiol.">
        <title>Characterization of five abscisic acid-responsive cDNA clones isolated from the desiccation-tolerant plant Craterostigma plantagineum and their relationship to other water-stress genes.</title>
        <authorList>
            <person name="Piatkowski D."/>
            <person name="Schneider K."/>
            <person name="Salamini F."/>
            <person name="Bartels D."/>
        </authorList>
    </citation>
    <scope>NUCLEOTIDE SEQUENCE [MRNA]</scope>
    <source>
        <tissue>Leaf</tissue>
    </source>
</reference>
<comment type="induction">
    <text>By desiccation (leaves) and by abscisic acid (ABA) (leaves and callus).</text>
</comment>
<comment type="similarity">
    <text evidence="2">Belongs to the LEA type 1 family.</text>
</comment>
<organism>
    <name type="scientific">Craterostigma plantagineum</name>
    <name type="common">Blue gem</name>
    <name type="synonym">Torenia plantagineum</name>
    <dbReference type="NCBI Taxonomy" id="4153"/>
    <lineage>
        <taxon>Eukaryota</taxon>
        <taxon>Viridiplantae</taxon>
        <taxon>Streptophyta</taxon>
        <taxon>Embryophyta</taxon>
        <taxon>Tracheophyta</taxon>
        <taxon>Spermatophyta</taxon>
        <taxon>Magnoliopsida</taxon>
        <taxon>eudicotyledons</taxon>
        <taxon>Gunneridae</taxon>
        <taxon>Pentapetalae</taxon>
        <taxon>asterids</taxon>
        <taxon>lamiids</taxon>
        <taxon>Lamiales</taxon>
        <taxon>Linderniaceae</taxon>
        <taxon>Craterostigma</taxon>
    </lineage>
</organism>
<feature type="chain" id="PRO_0000221229" description="Desiccation-related protein PCC3-06">
    <location>
        <begin position="1"/>
        <end position="201"/>
    </location>
</feature>
<feature type="region of interest" description="Disordered" evidence="1">
    <location>
        <begin position="41"/>
        <end position="155"/>
    </location>
</feature>
<feature type="region of interest" description="Disordered" evidence="1">
    <location>
        <begin position="177"/>
        <end position="201"/>
    </location>
</feature>
<feature type="compositionally biased region" description="Polar residues" evidence="1">
    <location>
        <begin position="41"/>
        <end position="54"/>
    </location>
</feature>
<feature type="compositionally biased region" description="Basic and acidic residues" evidence="1">
    <location>
        <begin position="57"/>
        <end position="76"/>
    </location>
</feature>
<feature type="compositionally biased region" description="Basic and acidic residues" evidence="1">
    <location>
        <begin position="108"/>
        <end position="144"/>
    </location>
</feature>
<feature type="compositionally biased region" description="Basic and acidic residues" evidence="1">
    <location>
        <begin position="177"/>
        <end position="193"/>
    </location>
</feature>
<name>DRPF_CRAPL</name>
<proteinExistence type="evidence at transcript level"/>
<dbReference type="EMBL" id="M62989">
    <property type="protein sequence ID" value="AAA63614.1"/>
    <property type="molecule type" value="mRNA"/>
</dbReference>
<dbReference type="PIR" id="C45509">
    <property type="entry name" value="C45509"/>
</dbReference>
<dbReference type="SMR" id="P23283"/>
<dbReference type="GO" id="GO:0071465">
    <property type="term" value="P:cellular response to desiccation"/>
    <property type="evidence" value="ECO:0000314"/>
    <property type="project" value="CAFA"/>
</dbReference>
<dbReference type="GO" id="GO:1902075">
    <property type="term" value="P:cellular response to salt"/>
    <property type="evidence" value="ECO:0000314"/>
    <property type="project" value="CAFA"/>
</dbReference>
<dbReference type="GO" id="GO:0009611">
    <property type="term" value="P:response to wounding"/>
    <property type="evidence" value="ECO:0000314"/>
    <property type="project" value="CAFA"/>
</dbReference>
<dbReference type="Gene3D" id="1.10.287.700">
    <property type="entry name" value="Helix hairpin bin"/>
    <property type="match status" value="2"/>
</dbReference>
<dbReference type="PANTHER" id="PTHR47372">
    <property type="entry name" value="DAUER UP-REGULATED-RELATED"/>
    <property type="match status" value="1"/>
</dbReference>
<dbReference type="PANTHER" id="PTHR47372:SF11">
    <property type="entry name" value="RE19971P"/>
    <property type="match status" value="1"/>
</dbReference>
<dbReference type="SUPFAM" id="SSF58113">
    <property type="entry name" value="Apolipoprotein A-I"/>
    <property type="match status" value="1"/>
</dbReference>
<protein>
    <recommendedName>
        <fullName>Desiccation-related protein PCC3-06</fullName>
    </recommendedName>
</protein>
<accession>P23283</accession>
<sequence length="201" mass="21940">MEAMSFAARSTVLSISKSFPKNNSPTYLTLRPKFSRVRFTTVASQSQGRQQVSENAEDAKKKFSETTDSLKHKTSEATDSASHKANGAARETNDKAKETYNAASGKAGELKDKTQEGAENVREKAMDAGNDAMEKTRNAGERVADGVSNVGQNVKENVMGAGEKVKEFAEDVKDTVMGKSEEVKNQAEHETKKRSTSTNYF</sequence>